<reference key="1">
    <citation type="journal article" date="1992" name="Mol. Microbiol.">
        <title>Horizontal gene transfer of the Escherichia coli pap and prs pili operons as a mechanism for the development of tissue-specific adhesive properties.</title>
        <authorList>
            <person name="Marklund B.-I."/>
            <person name="Tennent J.M."/>
            <person name="Garcia E."/>
            <person name="Hamers A."/>
            <person name="Baga M."/>
            <person name="Lindberg F."/>
            <person name="Gaastra W."/>
            <person name="Normark S."/>
        </authorList>
    </citation>
    <scope>NUCLEOTIDE SEQUENCE [GENOMIC DNA]</scope>
    <source>
        <strain>ATCC 700336 / J96 / UPEC</strain>
    </source>
</reference>
<accession>P42193</accession>
<sequence length="164" mass="19303">MNNTDLLEKIIRHQQNKDPAYPFREHLLMQLCIRVNKKIQNSTSEFFGAYGINHSVYMVLAILSMEEQHCLSPSEISQKLQFTRTNITRITDFLEKAGYIKRTDSREDRRTKKISLTSEGMFFIQRLTLAQNTYLKELWSNLTCDECEMFEVISKKLLAHFSDI</sequence>
<gene>
    <name type="primary">papX</name>
</gene>
<dbReference type="EMBL" id="X61239">
    <property type="protein sequence ID" value="CAA43571.1"/>
    <property type="molecule type" value="Genomic_DNA"/>
</dbReference>
<dbReference type="PIR" id="S25225">
    <property type="entry name" value="S25225"/>
</dbReference>
<dbReference type="RefSeq" id="WP_001066240.1">
    <property type="nucleotide sequence ID" value="NZ_VYVE01000046.1"/>
</dbReference>
<dbReference type="SMR" id="P42193"/>
<dbReference type="GO" id="GO:0005737">
    <property type="term" value="C:cytoplasm"/>
    <property type="evidence" value="ECO:0007669"/>
    <property type="project" value="UniProtKB-SubCell"/>
</dbReference>
<dbReference type="GO" id="GO:0003677">
    <property type="term" value="F:DNA binding"/>
    <property type="evidence" value="ECO:0007669"/>
    <property type="project" value="UniProtKB-KW"/>
</dbReference>
<dbReference type="GO" id="GO:0003700">
    <property type="term" value="F:DNA-binding transcription factor activity"/>
    <property type="evidence" value="ECO:0007669"/>
    <property type="project" value="InterPro"/>
</dbReference>
<dbReference type="CDD" id="cd00090">
    <property type="entry name" value="HTH_ARSR"/>
    <property type="match status" value="1"/>
</dbReference>
<dbReference type="Gene3D" id="1.10.10.10">
    <property type="entry name" value="Winged helix-like DNA-binding domain superfamily/Winged helix DNA-binding domain"/>
    <property type="match status" value="1"/>
</dbReference>
<dbReference type="InterPro" id="IPR011991">
    <property type="entry name" value="ArsR-like_HTH"/>
</dbReference>
<dbReference type="InterPro" id="IPR000835">
    <property type="entry name" value="HTH_MarR-typ"/>
</dbReference>
<dbReference type="InterPro" id="IPR023187">
    <property type="entry name" value="Tscrpt_reg_MarR-type_CS"/>
</dbReference>
<dbReference type="InterPro" id="IPR036388">
    <property type="entry name" value="WH-like_DNA-bd_sf"/>
</dbReference>
<dbReference type="InterPro" id="IPR036390">
    <property type="entry name" value="WH_DNA-bd_sf"/>
</dbReference>
<dbReference type="PANTHER" id="PTHR42756">
    <property type="entry name" value="TRANSCRIPTIONAL REGULATOR, MARR"/>
    <property type="match status" value="1"/>
</dbReference>
<dbReference type="PANTHER" id="PTHR42756:SF1">
    <property type="entry name" value="TRANSCRIPTIONAL REPRESSOR OF EMRAB OPERON"/>
    <property type="match status" value="1"/>
</dbReference>
<dbReference type="Pfam" id="PF12802">
    <property type="entry name" value="MarR_2"/>
    <property type="match status" value="1"/>
</dbReference>
<dbReference type="PRINTS" id="PR00598">
    <property type="entry name" value="HTHMARR"/>
</dbReference>
<dbReference type="SMART" id="SM00347">
    <property type="entry name" value="HTH_MARR"/>
    <property type="match status" value="1"/>
</dbReference>
<dbReference type="SUPFAM" id="SSF46785">
    <property type="entry name" value="Winged helix' DNA-binding domain"/>
    <property type="match status" value="1"/>
</dbReference>
<dbReference type="PROSITE" id="PS01117">
    <property type="entry name" value="HTH_MARR_1"/>
    <property type="match status" value="1"/>
</dbReference>
<dbReference type="PROSITE" id="PS50995">
    <property type="entry name" value="HTH_MARR_2"/>
    <property type="match status" value="1"/>
</dbReference>
<organism>
    <name type="scientific">Escherichia coli</name>
    <dbReference type="NCBI Taxonomy" id="562"/>
    <lineage>
        <taxon>Bacteria</taxon>
        <taxon>Pseudomonadati</taxon>
        <taxon>Pseudomonadota</taxon>
        <taxon>Gammaproteobacteria</taxon>
        <taxon>Enterobacterales</taxon>
        <taxon>Enterobacteriaceae</taxon>
        <taxon>Escherichia</taxon>
    </lineage>
</organism>
<feature type="chain" id="PRO_0000054379" description="HTH-type transcriptional regulator PapX">
    <location>
        <begin position="1"/>
        <end position="164"/>
    </location>
</feature>
<feature type="domain" description="HTH marR-type" evidence="1">
    <location>
        <begin position="25"/>
        <end position="159"/>
    </location>
</feature>
<protein>
    <recommendedName>
        <fullName>HTH-type transcriptional regulator PapX</fullName>
    </recommendedName>
</protein>
<name>PAPX_ECOLX</name>
<keyword id="KW-0963">Cytoplasm</keyword>
<keyword id="KW-0238">DNA-binding</keyword>
<keyword id="KW-0804">Transcription</keyword>
<keyword id="KW-0805">Transcription regulation</keyword>
<comment type="subcellular location">
    <subcellularLocation>
        <location>Cytoplasm</location>
    </subcellularLocation>
</comment>
<proteinExistence type="predicted"/>
<evidence type="ECO:0000255" key="1">
    <source>
        <dbReference type="PROSITE-ProRule" id="PRU00345"/>
    </source>
</evidence>